<comment type="function">
    <text evidence="1">The H3 subclass of histamine receptors could mediate the histamine signals in CNS and peripheral nervous system. Signals through the inhibition of adenylate cyclase and displays high constitutive activity (spontaneous activity in the absence of agonist) (By similarity).</text>
</comment>
<comment type="subcellular location">
    <subcellularLocation>
        <location>Cell membrane</location>
        <topology>Multi-pass membrane protein</topology>
    </subcellularLocation>
</comment>
<comment type="similarity">
    <text evidence="3">Belongs to the G-protein coupled receptor 1 family.</text>
</comment>
<name>HRH3_MOUSE</name>
<organism>
    <name type="scientific">Mus musculus</name>
    <name type="common">Mouse</name>
    <dbReference type="NCBI Taxonomy" id="10090"/>
    <lineage>
        <taxon>Eukaryota</taxon>
        <taxon>Metazoa</taxon>
        <taxon>Chordata</taxon>
        <taxon>Craniata</taxon>
        <taxon>Vertebrata</taxon>
        <taxon>Euteleostomi</taxon>
        <taxon>Mammalia</taxon>
        <taxon>Eutheria</taxon>
        <taxon>Euarchontoglires</taxon>
        <taxon>Glires</taxon>
        <taxon>Rodentia</taxon>
        <taxon>Myomorpha</taxon>
        <taxon>Muroidea</taxon>
        <taxon>Muridae</taxon>
        <taxon>Murinae</taxon>
        <taxon>Mus</taxon>
        <taxon>Mus</taxon>
    </lineage>
</organism>
<keyword id="KW-1003">Cell membrane</keyword>
<keyword id="KW-1015">Disulfide bond</keyword>
<keyword id="KW-0297">G-protein coupled receptor</keyword>
<keyword id="KW-0325">Glycoprotein</keyword>
<keyword id="KW-0472">Membrane</keyword>
<keyword id="KW-0597">Phosphoprotein</keyword>
<keyword id="KW-0675">Receptor</keyword>
<keyword id="KW-1185">Reference proteome</keyword>
<keyword id="KW-0807">Transducer</keyword>
<keyword id="KW-0812">Transmembrane</keyword>
<keyword id="KW-1133">Transmembrane helix</keyword>
<evidence type="ECO:0000250" key="1"/>
<evidence type="ECO:0000255" key="2"/>
<evidence type="ECO:0000255" key="3">
    <source>
        <dbReference type="PROSITE-ProRule" id="PRU00521"/>
    </source>
</evidence>
<evidence type="ECO:0000256" key="4">
    <source>
        <dbReference type="SAM" id="MobiDB-lite"/>
    </source>
</evidence>
<evidence type="ECO:0007744" key="5">
    <source>
    </source>
</evidence>
<proteinExistence type="evidence at protein level"/>
<sequence>MERAPPDGLMNASGALAGEAAAAGGARGFSAAWTAVLAALMALLIVATVLGNALVMLAFVADSSLRTQNNFFLLNLAISDFLVGAFCIPLYVPYVLTGRWTFGRGLCKLWLVVDYLLCASSVFNIVLISYDRFLSVTRAVSYRAQQGDTRRAVRKMALVWVLAFLLYGPAILSWEYLSGGSSIPEGHCYAEFFYNWYFLITASTLEFFTPFLSVTFFNLSIYLNIQRRTRLRLDGGREAGPEPPPDAQPSPPPAPPSCWGCWPKGHGEAMPLHRYGVGEAGPGVETGEAGLGGGSGGGAAASPTSSSGSSSRGTERPRSLKRGSKPSASSASLEKRMKMVSQSITQRFRLSRDKKVAKSLAIIVSIFGLCWAPYTLLMIIRAACHGHCVPDYWYETSFWLLWANSAVNPVLYPLCHYSFRRAFTKLLCPQKLKVQPHGSLEQCWK</sequence>
<dbReference type="EMBL" id="AY044153">
    <property type="protein sequence ID" value="AAK72406.1"/>
    <property type="molecule type" value="mRNA"/>
</dbReference>
<dbReference type="CCDS" id="CCDS17169.1"/>
<dbReference type="RefSeq" id="NP_598610.1">
    <property type="nucleotide sequence ID" value="NM_133849.4"/>
</dbReference>
<dbReference type="SMR" id="P58406"/>
<dbReference type="FunCoup" id="P58406">
    <property type="interactions" value="561"/>
</dbReference>
<dbReference type="STRING" id="10090.ENSMUSP00000049963"/>
<dbReference type="BindingDB" id="P58406"/>
<dbReference type="ChEMBL" id="CHEMBL3263"/>
<dbReference type="DrugCentral" id="P58406"/>
<dbReference type="GuidetoPHARMACOLOGY" id="264"/>
<dbReference type="GlyCosmos" id="P58406">
    <property type="glycosylation" value="1 site, No reported glycans"/>
</dbReference>
<dbReference type="GlyGen" id="P58406">
    <property type="glycosylation" value="2 sites, 1 N-linked glycan (1 site)"/>
</dbReference>
<dbReference type="iPTMnet" id="P58406"/>
<dbReference type="PhosphoSitePlus" id="P58406"/>
<dbReference type="SwissPalm" id="P58406"/>
<dbReference type="PaxDb" id="10090-ENSMUSP00000049963"/>
<dbReference type="ProteomicsDB" id="267018"/>
<dbReference type="Antibodypedia" id="14714">
    <property type="antibodies" value="484 antibodies from 35 providers"/>
</dbReference>
<dbReference type="DNASU" id="99296"/>
<dbReference type="Ensembl" id="ENSMUST00000056480.10">
    <property type="protein sequence ID" value="ENSMUSP00000049963.4"/>
    <property type="gene ID" value="ENSMUSG00000039059.12"/>
</dbReference>
<dbReference type="GeneID" id="99296"/>
<dbReference type="KEGG" id="mmu:99296"/>
<dbReference type="UCSC" id="uc008oij.2">
    <property type="organism name" value="mouse"/>
</dbReference>
<dbReference type="AGR" id="MGI:2139279"/>
<dbReference type="CTD" id="11255"/>
<dbReference type="MGI" id="MGI:2139279">
    <property type="gene designation" value="Hrh3"/>
</dbReference>
<dbReference type="VEuPathDB" id="HostDB:ENSMUSG00000039059"/>
<dbReference type="eggNOG" id="KOG3656">
    <property type="taxonomic scope" value="Eukaryota"/>
</dbReference>
<dbReference type="GeneTree" id="ENSGT00940000161502"/>
<dbReference type="InParanoid" id="P58406"/>
<dbReference type="OMA" id="CWEWEQK"/>
<dbReference type="OrthoDB" id="66872at9989"/>
<dbReference type="PhylomeDB" id="P58406"/>
<dbReference type="TreeFam" id="TF351747"/>
<dbReference type="Reactome" id="R-MMU-390650">
    <property type="pathway name" value="Histamine receptors"/>
</dbReference>
<dbReference type="BioGRID-ORCS" id="99296">
    <property type="hits" value="3 hits in 77 CRISPR screens"/>
</dbReference>
<dbReference type="PRO" id="PR:P58406"/>
<dbReference type="Proteomes" id="UP000000589">
    <property type="component" value="Chromosome 2"/>
</dbReference>
<dbReference type="RNAct" id="P58406">
    <property type="molecule type" value="protein"/>
</dbReference>
<dbReference type="Bgee" id="ENSMUSG00000039059">
    <property type="expression patterns" value="Expressed in superior frontal gyrus and 56 other cell types or tissues"/>
</dbReference>
<dbReference type="ExpressionAtlas" id="P58406">
    <property type="expression patterns" value="baseline and differential"/>
</dbReference>
<dbReference type="GO" id="GO:0005886">
    <property type="term" value="C:plasma membrane"/>
    <property type="evidence" value="ECO:0007669"/>
    <property type="project" value="UniProtKB-SubCell"/>
</dbReference>
<dbReference type="GO" id="GO:0004969">
    <property type="term" value="F:histamine receptor activity"/>
    <property type="evidence" value="ECO:0007669"/>
    <property type="project" value="InterPro"/>
</dbReference>
<dbReference type="CDD" id="cd15296">
    <property type="entry name" value="7tmA_Histamine_H3R"/>
    <property type="match status" value="1"/>
</dbReference>
<dbReference type="FunFam" id="1.20.1070.10:FF:000138">
    <property type="entry name" value="histamine H3 receptor"/>
    <property type="match status" value="1"/>
</dbReference>
<dbReference type="Gene3D" id="1.20.1070.10">
    <property type="entry name" value="Rhodopsin 7-helix transmembrane proteins"/>
    <property type="match status" value="1"/>
</dbReference>
<dbReference type="InterPro" id="IPR041998">
    <property type="entry name" value="7tmA_HRH3"/>
</dbReference>
<dbReference type="InterPro" id="IPR000276">
    <property type="entry name" value="GPCR_Rhodpsn"/>
</dbReference>
<dbReference type="InterPro" id="IPR017452">
    <property type="entry name" value="GPCR_Rhodpsn_7TM"/>
</dbReference>
<dbReference type="InterPro" id="IPR003980">
    <property type="entry name" value="Histamine_H3_rcpt"/>
</dbReference>
<dbReference type="PANTHER" id="PTHR24247">
    <property type="entry name" value="5-HYDROXYTRYPTAMINE RECEPTOR"/>
    <property type="match status" value="1"/>
</dbReference>
<dbReference type="PANTHER" id="PTHR24247:SF194">
    <property type="entry name" value="HISTAMINE H3 RECEPTOR"/>
    <property type="match status" value="1"/>
</dbReference>
<dbReference type="Pfam" id="PF00001">
    <property type="entry name" value="7tm_1"/>
    <property type="match status" value="1"/>
</dbReference>
<dbReference type="PRINTS" id="PR00237">
    <property type="entry name" value="GPCRRHODOPSN"/>
</dbReference>
<dbReference type="PRINTS" id="PR01471">
    <property type="entry name" value="HISTAMINEH3R"/>
</dbReference>
<dbReference type="SMART" id="SM01381">
    <property type="entry name" value="7TM_GPCR_Srsx"/>
    <property type="match status" value="1"/>
</dbReference>
<dbReference type="SUPFAM" id="SSF81321">
    <property type="entry name" value="Family A G protein-coupled receptor-like"/>
    <property type="match status" value="1"/>
</dbReference>
<dbReference type="PROSITE" id="PS00237">
    <property type="entry name" value="G_PROTEIN_RECEP_F1_1"/>
    <property type="match status" value="1"/>
</dbReference>
<dbReference type="PROSITE" id="PS50262">
    <property type="entry name" value="G_PROTEIN_RECEP_F1_2"/>
    <property type="match status" value="1"/>
</dbReference>
<reference key="1">
    <citation type="submission" date="2001-07" db="EMBL/GenBank/DDBJ databases">
        <title>Cloning of mouse histamine H3 receptor.</title>
        <authorList>
            <person name="Coge F."/>
            <person name="Rique H."/>
            <person name="Levacher B."/>
            <person name="Leopold O."/>
            <person name="Guenin S.-P."/>
            <person name="Boutin J.A."/>
            <person name="Galizzi J.-P."/>
        </authorList>
    </citation>
    <scope>NUCLEOTIDE SEQUENCE [MRNA]</scope>
    <source>
        <strain>CD-1</strain>
    </source>
</reference>
<reference key="2">
    <citation type="journal article" date="2010" name="Cell">
        <title>A tissue-specific atlas of mouse protein phosphorylation and expression.</title>
        <authorList>
            <person name="Huttlin E.L."/>
            <person name="Jedrychowski M.P."/>
            <person name="Elias J.E."/>
            <person name="Goswami T."/>
            <person name="Rad R."/>
            <person name="Beausoleil S.A."/>
            <person name="Villen J."/>
            <person name="Haas W."/>
            <person name="Sowa M.E."/>
            <person name="Gygi S.P."/>
        </authorList>
    </citation>
    <scope>PHOSPHORYLATION [LARGE SCALE ANALYSIS] AT SER-439</scope>
    <scope>IDENTIFICATION BY MASS SPECTROMETRY [LARGE SCALE ANALYSIS]</scope>
    <source>
        <tissue>Brain</tissue>
    </source>
</reference>
<feature type="chain" id="PRO_0000069691" description="Histamine H3 receptor">
    <location>
        <begin position="1"/>
        <end position="445"/>
    </location>
</feature>
<feature type="topological domain" description="Extracellular" evidence="2">
    <location>
        <begin position="1"/>
        <end position="39"/>
    </location>
</feature>
<feature type="transmembrane region" description="Helical; Name=1" evidence="2">
    <location>
        <begin position="40"/>
        <end position="60"/>
    </location>
</feature>
<feature type="topological domain" description="Cytoplasmic" evidence="2">
    <location>
        <begin position="61"/>
        <end position="70"/>
    </location>
</feature>
<feature type="transmembrane region" description="Helical; Name=2" evidence="2">
    <location>
        <begin position="71"/>
        <end position="91"/>
    </location>
</feature>
<feature type="topological domain" description="Extracellular" evidence="2">
    <location>
        <begin position="92"/>
        <end position="108"/>
    </location>
</feature>
<feature type="transmembrane region" description="Helical; Name=3" evidence="2">
    <location>
        <begin position="109"/>
        <end position="129"/>
    </location>
</feature>
<feature type="topological domain" description="Cytoplasmic" evidence="2">
    <location>
        <begin position="130"/>
        <end position="156"/>
    </location>
</feature>
<feature type="transmembrane region" description="Helical; Name=4" evidence="2">
    <location>
        <begin position="157"/>
        <end position="177"/>
    </location>
</feature>
<feature type="topological domain" description="Extracellular" evidence="2">
    <location>
        <begin position="178"/>
        <end position="196"/>
    </location>
</feature>
<feature type="transmembrane region" description="Helical; Name=5" evidence="2">
    <location>
        <begin position="197"/>
        <end position="217"/>
    </location>
</feature>
<feature type="topological domain" description="Cytoplasmic" evidence="2">
    <location>
        <begin position="218"/>
        <end position="359"/>
    </location>
</feature>
<feature type="transmembrane region" description="Helical; Name=6" evidence="2">
    <location>
        <begin position="360"/>
        <end position="380"/>
    </location>
</feature>
<feature type="topological domain" description="Extracellular" evidence="2">
    <location>
        <begin position="381"/>
        <end position="396"/>
    </location>
</feature>
<feature type="transmembrane region" description="Helical; Name=7" evidence="2">
    <location>
        <begin position="397"/>
        <end position="417"/>
    </location>
</feature>
<feature type="topological domain" description="Cytoplasmic" evidence="2">
    <location>
        <begin position="418"/>
        <end position="445"/>
    </location>
</feature>
<feature type="region of interest" description="Disordered" evidence="4">
    <location>
        <begin position="234"/>
        <end position="259"/>
    </location>
</feature>
<feature type="region of interest" description="Disordered" evidence="4">
    <location>
        <begin position="273"/>
        <end position="336"/>
    </location>
</feature>
<feature type="compositionally biased region" description="Pro residues" evidence="4">
    <location>
        <begin position="241"/>
        <end position="256"/>
    </location>
</feature>
<feature type="compositionally biased region" description="Gly residues" evidence="4">
    <location>
        <begin position="289"/>
        <end position="299"/>
    </location>
</feature>
<feature type="compositionally biased region" description="Low complexity" evidence="4">
    <location>
        <begin position="300"/>
        <end position="312"/>
    </location>
</feature>
<feature type="modified residue" description="Phosphoserine" evidence="5">
    <location>
        <position position="439"/>
    </location>
</feature>
<feature type="glycosylation site" description="N-linked (GlcNAc...) asparagine" evidence="2">
    <location>
        <position position="11"/>
    </location>
</feature>
<feature type="disulfide bond" evidence="3">
    <location>
        <begin position="107"/>
        <end position="188"/>
    </location>
</feature>
<protein>
    <recommendedName>
        <fullName>Histamine H3 receptor</fullName>
        <shortName>H3R</shortName>
        <shortName>HH3R</shortName>
    </recommendedName>
</protein>
<gene>
    <name type="primary">Hrh3</name>
</gene>
<accession>P58406</accession>